<evidence type="ECO:0000255" key="1">
    <source>
        <dbReference type="HAMAP-Rule" id="MF_00013"/>
    </source>
</evidence>
<evidence type="ECO:0000255" key="2">
    <source>
        <dbReference type="PROSITE-ProRule" id="PRU01067"/>
    </source>
</evidence>
<feature type="chain" id="PRO_0000242772" description="Octanoyltransferase">
    <location>
        <begin position="1"/>
        <end position="229"/>
    </location>
</feature>
<feature type="domain" description="BPL/LPL catalytic" evidence="2">
    <location>
        <begin position="47"/>
        <end position="225"/>
    </location>
</feature>
<feature type="active site" description="Acyl-thioester intermediate" evidence="1">
    <location>
        <position position="187"/>
    </location>
</feature>
<feature type="binding site" evidence="1">
    <location>
        <begin position="89"/>
        <end position="96"/>
    </location>
    <ligand>
        <name>substrate</name>
    </ligand>
</feature>
<feature type="binding site" evidence="1">
    <location>
        <begin position="156"/>
        <end position="158"/>
    </location>
    <ligand>
        <name>substrate</name>
    </ligand>
</feature>
<feature type="binding site" evidence="1">
    <location>
        <begin position="169"/>
        <end position="171"/>
    </location>
    <ligand>
        <name>substrate</name>
    </ligand>
</feature>
<feature type="site" description="Lowers pKa of active site Cys" evidence="1">
    <location>
        <position position="153"/>
    </location>
</feature>
<comment type="function">
    <text evidence="1">Catalyzes the transfer of endogenously produced octanoic acid from octanoyl-acyl-carrier-protein onto the lipoyl domains of lipoate-dependent enzymes. Lipoyl-ACP can also act as a substrate although octanoyl-ACP is likely to be the physiological substrate.</text>
</comment>
<comment type="catalytic activity">
    <reaction evidence="1">
        <text>octanoyl-[ACP] + L-lysyl-[protein] = N(6)-octanoyl-L-lysyl-[protein] + holo-[ACP] + H(+)</text>
        <dbReference type="Rhea" id="RHEA:17665"/>
        <dbReference type="Rhea" id="RHEA-COMP:9636"/>
        <dbReference type="Rhea" id="RHEA-COMP:9685"/>
        <dbReference type="Rhea" id="RHEA-COMP:9752"/>
        <dbReference type="Rhea" id="RHEA-COMP:9928"/>
        <dbReference type="ChEBI" id="CHEBI:15378"/>
        <dbReference type="ChEBI" id="CHEBI:29969"/>
        <dbReference type="ChEBI" id="CHEBI:64479"/>
        <dbReference type="ChEBI" id="CHEBI:78463"/>
        <dbReference type="ChEBI" id="CHEBI:78809"/>
        <dbReference type="EC" id="2.3.1.181"/>
    </reaction>
</comment>
<comment type="pathway">
    <text evidence="1">Protein modification; protein lipoylation via endogenous pathway; protein N(6)-(lipoyl)lysine from octanoyl-[acyl-carrier-protein]: step 1/2.</text>
</comment>
<comment type="subcellular location">
    <subcellularLocation>
        <location evidence="1">Cytoplasm</location>
    </subcellularLocation>
</comment>
<comment type="miscellaneous">
    <text evidence="1">In the reaction, the free carboxyl group of octanoic acid is attached via an amide linkage to the epsilon-amino group of a specific lysine residue of lipoyl domains of lipoate-dependent enzymes.</text>
</comment>
<comment type="similarity">
    <text evidence="1">Belongs to the LipB family.</text>
</comment>
<proteinExistence type="inferred from homology"/>
<name>LIPB_SYNS9</name>
<sequence>MDIGKLVTRRSSEHPAGAFLFEPSVLIPFERAWRDQQLWQQRLFEEPSSPEAVWILQHPACYTLGRGASAQHLHFDPNEPPAPLHRIDRGGEVTHHLPGQLVAYPVLDLQRHTPDLHLYLRQLELVVIDVLRDLGLQGECLPGLTGVWVGRCKVAAIGVGCRRWITQHGLALNVDCELQGFAEITPCGLVGHQVGRLCDWMPGLRVSDVQPLLRQSLAARFHLAWIPQA</sequence>
<organism>
    <name type="scientific">Synechococcus sp. (strain CC9902)</name>
    <dbReference type="NCBI Taxonomy" id="316279"/>
    <lineage>
        <taxon>Bacteria</taxon>
        <taxon>Bacillati</taxon>
        <taxon>Cyanobacteriota</taxon>
        <taxon>Cyanophyceae</taxon>
        <taxon>Synechococcales</taxon>
        <taxon>Synechococcaceae</taxon>
        <taxon>Synechococcus</taxon>
    </lineage>
</organism>
<gene>
    <name evidence="1" type="primary">lipB</name>
    <name type="ordered locus">Syncc9902_0659</name>
</gene>
<keyword id="KW-0012">Acyltransferase</keyword>
<keyword id="KW-0963">Cytoplasm</keyword>
<keyword id="KW-1185">Reference proteome</keyword>
<keyword id="KW-0808">Transferase</keyword>
<reference key="1">
    <citation type="submission" date="2005-08" db="EMBL/GenBank/DDBJ databases">
        <title>Complete sequence of Synechococcus sp. CC9902.</title>
        <authorList>
            <person name="Copeland A."/>
            <person name="Lucas S."/>
            <person name="Lapidus A."/>
            <person name="Barry K."/>
            <person name="Detter J.C."/>
            <person name="Glavina T."/>
            <person name="Hammon N."/>
            <person name="Israni S."/>
            <person name="Pitluck S."/>
            <person name="Martinez M."/>
            <person name="Schmutz J."/>
            <person name="Larimer F."/>
            <person name="Land M."/>
            <person name="Kyrpides N."/>
            <person name="Ivanova N."/>
            <person name="Richardson P."/>
        </authorList>
    </citation>
    <scope>NUCLEOTIDE SEQUENCE [LARGE SCALE GENOMIC DNA]</scope>
    <source>
        <strain>CC9902</strain>
    </source>
</reference>
<protein>
    <recommendedName>
        <fullName evidence="1">Octanoyltransferase</fullName>
        <ecNumber evidence="1">2.3.1.181</ecNumber>
    </recommendedName>
    <alternativeName>
        <fullName evidence="1">Lipoate-protein ligase B</fullName>
    </alternativeName>
    <alternativeName>
        <fullName evidence="1">Lipoyl/octanoyl transferase</fullName>
    </alternativeName>
    <alternativeName>
        <fullName evidence="1">Octanoyl-[acyl-carrier-protein]-protein N-octanoyltransferase</fullName>
    </alternativeName>
</protein>
<dbReference type="EC" id="2.3.1.181" evidence="1"/>
<dbReference type="EMBL" id="CP000097">
    <property type="protein sequence ID" value="ABB25627.1"/>
    <property type="molecule type" value="Genomic_DNA"/>
</dbReference>
<dbReference type="SMR" id="Q3AZ50"/>
<dbReference type="STRING" id="316279.Syncc9902_0659"/>
<dbReference type="KEGG" id="sye:Syncc9902_0659"/>
<dbReference type="eggNOG" id="COG0321">
    <property type="taxonomic scope" value="Bacteria"/>
</dbReference>
<dbReference type="HOGENOM" id="CLU_035168_1_0_3"/>
<dbReference type="UniPathway" id="UPA00538">
    <property type="reaction ID" value="UER00592"/>
</dbReference>
<dbReference type="Proteomes" id="UP000002712">
    <property type="component" value="Chromosome"/>
</dbReference>
<dbReference type="GO" id="GO:0005737">
    <property type="term" value="C:cytoplasm"/>
    <property type="evidence" value="ECO:0007669"/>
    <property type="project" value="UniProtKB-SubCell"/>
</dbReference>
<dbReference type="GO" id="GO:0033819">
    <property type="term" value="F:lipoyl(octanoyl) transferase activity"/>
    <property type="evidence" value="ECO:0007669"/>
    <property type="project" value="UniProtKB-EC"/>
</dbReference>
<dbReference type="GO" id="GO:0036211">
    <property type="term" value="P:protein modification process"/>
    <property type="evidence" value="ECO:0007669"/>
    <property type="project" value="InterPro"/>
</dbReference>
<dbReference type="CDD" id="cd16444">
    <property type="entry name" value="LipB"/>
    <property type="match status" value="1"/>
</dbReference>
<dbReference type="Gene3D" id="3.30.930.10">
    <property type="entry name" value="Bira Bifunctional Protein, Domain 2"/>
    <property type="match status" value="1"/>
</dbReference>
<dbReference type="HAMAP" id="MF_00013">
    <property type="entry name" value="LipB"/>
    <property type="match status" value="1"/>
</dbReference>
<dbReference type="InterPro" id="IPR045864">
    <property type="entry name" value="aa-tRNA-synth_II/BPL/LPL"/>
</dbReference>
<dbReference type="InterPro" id="IPR004143">
    <property type="entry name" value="BPL_LPL_catalytic"/>
</dbReference>
<dbReference type="InterPro" id="IPR000544">
    <property type="entry name" value="Octanoyltransferase"/>
</dbReference>
<dbReference type="InterPro" id="IPR020605">
    <property type="entry name" value="Octanoyltransferase_CS"/>
</dbReference>
<dbReference type="NCBIfam" id="TIGR00214">
    <property type="entry name" value="lipB"/>
    <property type="match status" value="1"/>
</dbReference>
<dbReference type="PANTHER" id="PTHR10993:SF7">
    <property type="entry name" value="LIPOYLTRANSFERASE 2, MITOCHONDRIAL-RELATED"/>
    <property type="match status" value="1"/>
</dbReference>
<dbReference type="PANTHER" id="PTHR10993">
    <property type="entry name" value="OCTANOYLTRANSFERASE"/>
    <property type="match status" value="1"/>
</dbReference>
<dbReference type="Pfam" id="PF21948">
    <property type="entry name" value="LplA-B_cat"/>
    <property type="match status" value="1"/>
</dbReference>
<dbReference type="PIRSF" id="PIRSF016262">
    <property type="entry name" value="LPLase"/>
    <property type="match status" value="1"/>
</dbReference>
<dbReference type="SUPFAM" id="SSF55681">
    <property type="entry name" value="Class II aaRS and biotin synthetases"/>
    <property type="match status" value="1"/>
</dbReference>
<dbReference type="PROSITE" id="PS51733">
    <property type="entry name" value="BPL_LPL_CATALYTIC"/>
    <property type="match status" value="1"/>
</dbReference>
<dbReference type="PROSITE" id="PS01313">
    <property type="entry name" value="LIPB"/>
    <property type="match status" value="1"/>
</dbReference>
<accession>Q3AZ50</accession>